<keyword id="KW-1003">Cell membrane</keyword>
<keyword id="KW-0472">Membrane</keyword>
<keyword id="KW-1185">Reference proteome</keyword>
<keyword id="KW-0812">Transmembrane</keyword>
<keyword id="KW-1133">Transmembrane helix</keyword>
<name>Y1735_MYCTU</name>
<organism>
    <name type="scientific">Mycobacterium tuberculosis (strain ATCC 25618 / H37Rv)</name>
    <dbReference type="NCBI Taxonomy" id="83332"/>
    <lineage>
        <taxon>Bacteria</taxon>
        <taxon>Bacillati</taxon>
        <taxon>Actinomycetota</taxon>
        <taxon>Actinomycetes</taxon>
        <taxon>Mycobacteriales</taxon>
        <taxon>Mycobacteriaceae</taxon>
        <taxon>Mycobacterium</taxon>
        <taxon>Mycobacterium tuberculosis complex</taxon>
    </lineage>
</organism>
<proteinExistence type="evidence at protein level"/>
<evidence type="ECO:0000255" key="1"/>
<evidence type="ECO:0000269" key="2">
    <source>
    </source>
</evidence>
<evidence type="ECO:0000269" key="3">
    <source>
    </source>
</evidence>
<evidence type="ECO:0000269" key="4">
    <source>
    </source>
</evidence>
<evidence type="ECO:0000305" key="5"/>
<accession>P9WLS5</accession>
<accession>L0T7I8</accession>
<accession>P71993</accession>
<accession>Q7D822</accession>
<dbReference type="EMBL" id="AL123456">
    <property type="protein sequence ID" value="CCP44501.1"/>
    <property type="status" value="ALT_INIT"/>
    <property type="molecule type" value="Genomic_DNA"/>
</dbReference>
<dbReference type="PIR" id="B70688">
    <property type="entry name" value="B70688"/>
</dbReference>
<dbReference type="RefSeq" id="NP_216251.1">
    <property type="nucleotide sequence ID" value="NC_000962.3"/>
</dbReference>
<dbReference type="RefSeq" id="WP_003408511.1">
    <property type="nucleotide sequence ID" value="NC_000962.3"/>
</dbReference>
<dbReference type="RefSeq" id="WP_003898991.1">
    <property type="nucleotide sequence ID" value="NZ_NVQJ01000010.1"/>
</dbReference>
<dbReference type="STRING" id="83332.Rv1735c"/>
<dbReference type="PaxDb" id="83332-Rv1735c"/>
<dbReference type="GeneID" id="885216"/>
<dbReference type="KEGG" id="mtu:Rv1735c"/>
<dbReference type="PATRIC" id="fig|83332.12.peg.1930"/>
<dbReference type="TubercuList" id="Rv1735c"/>
<dbReference type="eggNOG" id="COG1275">
    <property type="taxonomic scope" value="Bacteria"/>
</dbReference>
<dbReference type="InParanoid" id="P9WLS5"/>
<dbReference type="OrthoDB" id="958273at2"/>
<dbReference type="Proteomes" id="UP000001584">
    <property type="component" value="Chromosome"/>
</dbReference>
<dbReference type="GO" id="GO:0005886">
    <property type="term" value="C:plasma membrane"/>
    <property type="evidence" value="ECO:0007669"/>
    <property type="project" value="UniProtKB-SubCell"/>
</dbReference>
<dbReference type="GO" id="GO:0055085">
    <property type="term" value="P:transmembrane transport"/>
    <property type="evidence" value="ECO:0007669"/>
    <property type="project" value="InterPro"/>
</dbReference>
<dbReference type="CDD" id="cd09319">
    <property type="entry name" value="TDT_like_1"/>
    <property type="match status" value="1"/>
</dbReference>
<dbReference type="Gene3D" id="1.50.10.150">
    <property type="entry name" value="Voltage-dependent anion channel"/>
    <property type="match status" value="1"/>
</dbReference>
<dbReference type="InterPro" id="IPR004695">
    <property type="entry name" value="SLAC1/Mae1/Ssu1/TehA"/>
</dbReference>
<dbReference type="InterPro" id="IPR038665">
    <property type="entry name" value="Voltage-dep_anion_channel_sf"/>
</dbReference>
<dbReference type="Pfam" id="PF03595">
    <property type="entry name" value="SLAC1"/>
    <property type="match status" value="1"/>
</dbReference>
<sequence>MFLYVAVGSLVVARLLLYPLRPADLTPPYWVAMGATAITVLAGAHIVEMADAPMAIVTSGLVAGASVVFWAFGPWLIPPLVAASIWKHVVHRVPLRYEATLWSVVFPLGMYGVGAYRLGLAAHLPIVESIGEFEGWVALAVWTITFVAMLHHLAATIGRSGRSSHAIGAADDTHAIICRPPRSFDHQVRAFRRNQPM</sequence>
<comment type="subcellular location">
    <subcellularLocation>
        <location evidence="5">Cell membrane</location>
        <topology evidence="5">Multi-pass membrane protein</topology>
    </subcellularLocation>
</comment>
<comment type="induction">
    <text evidence="2 3">A member of the dormancy regulon. Induced in response to reduced oxygen tension (hypoxia), low levels of nitric oxide (NO) and carbon monoxide (CO). It is hoped that this regulon will give insight into the latent, or dormant phase of infection.</text>
</comment>
<comment type="biotechnology">
    <text evidence="4">This protein serves as an immunogenic antigen, inducing gamma-interferon responses in whole-blood cultures from M.tuberculosis-exposed adults in Uganda, The Gambia and South Africa, indicating this might be a good vaccine candidate.</text>
</comment>
<comment type="sequence caution" evidence="5">
    <conflict type="erroneous initiation">
        <sequence resource="EMBL-CDS" id="CCP44501"/>
    </conflict>
    <text>Truncated N-terminus.</text>
</comment>
<gene>
    <name type="ordered locus">Rv1735c</name>
</gene>
<reference key="1">
    <citation type="journal article" date="1998" name="Nature">
        <title>Deciphering the biology of Mycobacterium tuberculosis from the complete genome sequence.</title>
        <authorList>
            <person name="Cole S.T."/>
            <person name="Brosch R."/>
            <person name="Parkhill J."/>
            <person name="Garnier T."/>
            <person name="Churcher C.M."/>
            <person name="Harris D.E."/>
            <person name="Gordon S.V."/>
            <person name="Eiglmeier K."/>
            <person name="Gas S."/>
            <person name="Barry C.E. III"/>
            <person name="Tekaia F."/>
            <person name="Badcock K."/>
            <person name="Basham D."/>
            <person name="Brown D."/>
            <person name="Chillingworth T."/>
            <person name="Connor R."/>
            <person name="Davies R.M."/>
            <person name="Devlin K."/>
            <person name="Feltwell T."/>
            <person name="Gentles S."/>
            <person name="Hamlin N."/>
            <person name="Holroyd S."/>
            <person name="Hornsby T."/>
            <person name="Jagels K."/>
            <person name="Krogh A."/>
            <person name="McLean J."/>
            <person name="Moule S."/>
            <person name="Murphy L.D."/>
            <person name="Oliver S."/>
            <person name="Osborne J."/>
            <person name="Quail M.A."/>
            <person name="Rajandream M.A."/>
            <person name="Rogers J."/>
            <person name="Rutter S."/>
            <person name="Seeger K."/>
            <person name="Skelton S."/>
            <person name="Squares S."/>
            <person name="Squares R."/>
            <person name="Sulston J.E."/>
            <person name="Taylor K."/>
            <person name="Whitehead S."/>
            <person name="Barrell B.G."/>
        </authorList>
    </citation>
    <scope>NUCLEOTIDE SEQUENCE [LARGE SCALE GENOMIC DNA]</scope>
    <source>
        <strain>ATCC 25618 / H37Rv</strain>
    </source>
</reference>
<reference key="2">
    <citation type="journal article" date="2003" name="J. Exp. Med.">
        <title>Inhibition of respiration by nitric oxide induces a Mycobacterium tuberculosis dormancy program.</title>
        <authorList>
            <person name="Voskuil M.I."/>
            <person name="Schnappinger D."/>
            <person name="Visconti K.C."/>
            <person name="Harrell M.I."/>
            <person name="Dolganov G.M."/>
            <person name="Sherman D.R."/>
            <person name="Schoolnik G.K."/>
        </authorList>
    </citation>
    <scope>INDUCTION BY NITRIC OXIDE (NO) AND BY HYPOXIA</scope>
    <scope>DORMANCY REGULON</scope>
    <source>
        <strain>ATCC 25618 / H37Rv</strain>
    </source>
</reference>
<reference key="3">
    <citation type="journal article" date="2008" name="J. Biol. Chem.">
        <title>Heme oxygenase-1-derived carbon monoxide induces the Mycobacterium tuberculosis dormancy regulon.</title>
        <authorList>
            <person name="Kumar A."/>
            <person name="Deshane J.S."/>
            <person name="Crossman D.K."/>
            <person name="Bolisetty S."/>
            <person name="Yan B.S."/>
            <person name="Kramnik I."/>
            <person name="Agarwal A."/>
            <person name="Steyn A.J."/>
        </authorList>
    </citation>
    <scope>INDUCTION BY CARBON MONOXIDE (CO)</scope>
    <scope>DORMANCY REGULON</scope>
    <source>
        <strain>ATCC 25618 / H37Rv</strain>
    </source>
</reference>
<reference key="4">
    <citation type="journal article" date="2009" name="Clin. Vaccine Immunol.">
        <title>Immunogenicity of novel DosR regulon-encoded candidate antigens of Mycobacterium tuberculosis in three high-burden populations in Africa.</title>
        <authorList>
            <person name="Black G.F."/>
            <person name="Thiel B.A."/>
            <person name="Ota M.O."/>
            <person name="Parida S.K."/>
            <person name="Adegbola R."/>
            <person name="Boom W.H."/>
            <person name="Dockrell H.M."/>
            <person name="Franken K.L."/>
            <person name="Friggen A.H."/>
            <person name="Hill P.C."/>
            <person name="Klein M.R."/>
            <person name="Lalor M.K."/>
            <person name="Mayanja H."/>
            <person name="Schoolnik G."/>
            <person name="Stanley K."/>
            <person name="Weldingh K."/>
            <person name="Kaufmann S.H."/>
            <person name="Walzl G."/>
            <person name="Ottenhoff T.H."/>
        </authorList>
    </citation>
    <scope>BIOTECHNOLOGY</scope>
</reference>
<feature type="chain" id="PRO_0000392908" description="Uncharacterized membrane protein Rv1735c">
    <location>
        <begin position="1"/>
        <end position="197"/>
    </location>
</feature>
<feature type="transmembrane region" description="Helical" evidence="1">
    <location>
        <begin position="30"/>
        <end position="50"/>
    </location>
</feature>
<feature type="transmembrane region" description="Helical" evidence="1">
    <location>
        <begin position="61"/>
        <end position="81"/>
    </location>
</feature>
<feature type="transmembrane region" description="Helical" evidence="1">
    <location>
        <begin position="101"/>
        <end position="121"/>
    </location>
</feature>
<feature type="transmembrane region" description="Helical" evidence="1">
    <location>
        <begin position="130"/>
        <end position="150"/>
    </location>
</feature>
<protein>
    <recommendedName>
        <fullName>Uncharacterized membrane protein Rv1735c</fullName>
    </recommendedName>
</protein>